<gene>
    <name evidence="8" type="primary">Rfng</name>
</gene>
<keyword id="KW-0217">Developmental protein</keyword>
<keyword id="KW-0221">Differentiation</keyword>
<keyword id="KW-1015">Disulfide bond</keyword>
<keyword id="KW-0325">Glycoprotein</keyword>
<keyword id="KW-0328">Glycosyltransferase</keyword>
<keyword id="KW-0333">Golgi apparatus</keyword>
<keyword id="KW-0464">Manganese</keyword>
<keyword id="KW-0472">Membrane</keyword>
<keyword id="KW-0479">Metal-binding</keyword>
<keyword id="KW-0524">Neurogenesis</keyword>
<keyword id="KW-1185">Reference proteome</keyword>
<keyword id="KW-0735">Signal-anchor</keyword>
<keyword id="KW-0808">Transferase</keyword>
<keyword id="KW-0812">Transmembrane</keyword>
<keyword id="KW-1133">Transmembrane helix</keyword>
<dbReference type="EC" id="2.4.1.222" evidence="5"/>
<dbReference type="EMBL" id="U94350">
    <property type="protein sequence ID" value="AAC53261.1"/>
    <property type="molecule type" value="mRNA"/>
</dbReference>
<dbReference type="EMBL" id="AF015770">
    <property type="protein sequence ID" value="AAB71670.1"/>
    <property type="molecule type" value="mRNA"/>
</dbReference>
<dbReference type="EMBL" id="AL663090">
    <property type="status" value="NOT_ANNOTATED_CDS"/>
    <property type="molecule type" value="Genomic_DNA"/>
</dbReference>
<dbReference type="EMBL" id="BC066023">
    <property type="protein sequence ID" value="AAH66023.1"/>
    <property type="molecule type" value="mRNA"/>
</dbReference>
<dbReference type="CCDS" id="CCDS25757.1"/>
<dbReference type="RefSeq" id="NP_033079.1">
    <property type="nucleotide sequence ID" value="NM_009053.2"/>
</dbReference>
<dbReference type="SMR" id="O09009"/>
<dbReference type="BioGRID" id="202870">
    <property type="interactions" value="1"/>
</dbReference>
<dbReference type="FunCoup" id="O09009">
    <property type="interactions" value="245"/>
</dbReference>
<dbReference type="STRING" id="10090.ENSMUSP00000026156"/>
<dbReference type="CAZy" id="GT31">
    <property type="family name" value="Glycosyltransferase Family 31"/>
</dbReference>
<dbReference type="GlyCosmos" id="O09009">
    <property type="glycosylation" value="1 site, No reported glycans"/>
</dbReference>
<dbReference type="GlyGen" id="O09009">
    <property type="glycosylation" value="1 site, 1 N-linked glycan (1 site)"/>
</dbReference>
<dbReference type="iPTMnet" id="O09009"/>
<dbReference type="PhosphoSitePlus" id="O09009"/>
<dbReference type="PaxDb" id="10090-ENSMUSP00000026156"/>
<dbReference type="ProteomicsDB" id="255299"/>
<dbReference type="Antibodypedia" id="2622">
    <property type="antibodies" value="113 antibodies from 20 providers"/>
</dbReference>
<dbReference type="DNASU" id="19719"/>
<dbReference type="Ensembl" id="ENSMUST00000026156.8">
    <property type="protein sequence ID" value="ENSMUSP00000026156.8"/>
    <property type="gene ID" value="ENSMUSG00000025158.8"/>
</dbReference>
<dbReference type="GeneID" id="19719"/>
<dbReference type="KEGG" id="mmu:19719"/>
<dbReference type="UCSC" id="uc007mum.1">
    <property type="organism name" value="mouse"/>
</dbReference>
<dbReference type="AGR" id="MGI:894275"/>
<dbReference type="CTD" id="5986"/>
<dbReference type="MGI" id="MGI:894275">
    <property type="gene designation" value="Rfng"/>
</dbReference>
<dbReference type="VEuPathDB" id="HostDB:ENSMUSG00000025158"/>
<dbReference type="eggNOG" id="ENOG502QV30">
    <property type="taxonomic scope" value="Eukaryota"/>
</dbReference>
<dbReference type="GeneTree" id="ENSGT00940000160801"/>
<dbReference type="HOGENOM" id="CLU_056611_0_1_1"/>
<dbReference type="InParanoid" id="O09009"/>
<dbReference type="OMA" id="DTDWCPM"/>
<dbReference type="OrthoDB" id="8959630at2759"/>
<dbReference type="PhylomeDB" id="O09009"/>
<dbReference type="TreeFam" id="TF324207"/>
<dbReference type="BioGRID-ORCS" id="19719">
    <property type="hits" value="1 hit in 78 CRISPR screens"/>
</dbReference>
<dbReference type="ChiTaRS" id="Rfng">
    <property type="organism name" value="mouse"/>
</dbReference>
<dbReference type="PRO" id="PR:O09009"/>
<dbReference type="Proteomes" id="UP000000589">
    <property type="component" value="Chromosome 11"/>
</dbReference>
<dbReference type="RNAct" id="O09009">
    <property type="molecule type" value="protein"/>
</dbReference>
<dbReference type="Bgee" id="ENSMUSG00000025158">
    <property type="expression patterns" value="Expressed in ileal epithelium and 266 other cell types or tissues"/>
</dbReference>
<dbReference type="GO" id="GO:0000139">
    <property type="term" value="C:Golgi membrane"/>
    <property type="evidence" value="ECO:0007669"/>
    <property type="project" value="UniProtKB-SubCell"/>
</dbReference>
<dbReference type="GO" id="GO:0046872">
    <property type="term" value="F:metal ion binding"/>
    <property type="evidence" value="ECO:0007669"/>
    <property type="project" value="UniProtKB-KW"/>
</dbReference>
<dbReference type="GO" id="GO:0033829">
    <property type="term" value="F:O-fucosylpeptide 3-beta-N-acetylglucosaminyltransferase activity"/>
    <property type="evidence" value="ECO:0000314"/>
    <property type="project" value="UniProtKB"/>
</dbReference>
<dbReference type="GO" id="GO:0030154">
    <property type="term" value="P:cell differentiation"/>
    <property type="evidence" value="ECO:0007669"/>
    <property type="project" value="UniProtKB-KW"/>
</dbReference>
<dbReference type="GO" id="GO:0007399">
    <property type="term" value="P:nervous system development"/>
    <property type="evidence" value="ECO:0007669"/>
    <property type="project" value="UniProtKB-KW"/>
</dbReference>
<dbReference type="GO" id="GO:0007389">
    <property type="term" value="P:pattern specification process"/>
    <property type="evidence" value="ECO:0007669"/>
    <property type="project" value="InterPro"/>
</dbReference>
<dbReference type="GO" id="GO:0045747">
    <property type="term" value="P:positive regulation of Notch signaling pathway"/>
    <property type="evidence" value="ECO:0000314"/>
    <property type="project" value="MGI"/>
</dbReference>
<dbReference type="GO" id="GO:0008593">
    <property type="term" value="P:regulation of Notch signaling pathway"/>
    <property type="evidence" value="ECO:0000315"/>
    <property type="project" value="UniProtKB"/>
</dbReference>
<dbReference type="FunFam" id="3.90.550.50:FF:000003">
    <property type="entry name" value="Beta-1,3-N-acetylglucosaminyltransferase"/>
    <property type="match status" value="1"/>
</dbReference>
<dbReference type="Gene3D" id="3.90.550.50">
    <property type="match status" value="1"/>
</dbReference>
<dbReference type="InterPro" id="IPR017374">
    <property type="entry name" value="Fringe"/>
</dbReference>
<dbReference type="InterPro" id="IPR003378">
    <property type="entry name" value="Fringe-like_glycosylTrfase"/>
</dbReference>
<dbReference type="PANTHER" id="PTHR10811">
    <property type="entry name" value="FRINGE-RELATED"/>
    <property type="match status" value="1"/>
</dbReference>
<dbReference type="Pfam" id="PF02434">
    <property type="entry name" value="Fringe"/>
    <property type="match status" value="1"/>
</dbReference>
<dbReference type="PIRSF" id="PIRSF038073">
    <property type="entry name" value="B-acetylgalactosaminyltfrase"/>
    <property type="match status" value="1"/>
</dbReference>
<reference key="1">
    <citation type="journal article" date="1997" name="Development">
        <title>A family of mammalian Fringe genes implicated in boundary determination and the Notch pathway.</title>
        <authorList>
            <person name="Johnston S.H."/>
            <person name="Rauskolb C."/>
            <person name="Wilson R."/>
            <person name="Prabhakaran B."/>
            <person name="Irvine K.D."/>
            <person name="Vogt T.F."/>
        </authorList>
    </citation>
    <scope>NUCLEOTIDE SEQUENCE [MRNA]</scope>
</reference>
<reference key="2">
    <citation type="journal article" date="1997" name="Nat. Genet.">
        <title>Fringe boundaries coincide with Notch-dependent patterning centres in mammals and alter Notch-dependent development in Drosophila.</title>
        <authorList>
            <person name="Cohen B."/>
            <person name="Bashirullah A."/>
            <person name="Dagnino L."/>
            <person name="Campbell C."/>
            <person name="Fisher W.W."/>
            <person name="Leow C.C."/>
            <person name="Whiting E."/>
            <person name="Ryan D."/>
            <person name="Zinyk D."/>
            <person name="Boulianne G."/>
            <person name="Hui C.-C."/>
            <person name="Gallie B."/>
            <person name="Phillips R.A."/>
            <person name="Lipshitz H.D."/>
            <person name="Egan S.E."/>
        </authorList>
    </citation>
    <scope>NUCLEOTIDE SEQUENCE [MRNA]</scope>
</reference>
<reference key="3">
    <citation type="journal article" date="2009" name="PLoS Biol.">
        <title>Lineage-specific biology revealed by a finished genome assembly of the mouse.</title>
        <authorList>
            <person name="Church D.M."/>
            <person name="Goodstadt L."/>
            <person name="Hillier L.W."/>
            <person name="Zody M.C."/>
            <person name="Goldstein S."/>
            <person name="She X."/>
            <person name="Bult C.J."/>
            <person name="Agarwala R."/>
            <person name="Cherry J.L."/>
            <person name="DiCuccio M."/>
            <person name="Hlavina W."/>
            <person name="Kapustin Y."/>
            <person name="Meric P."/>
            <person name="Maglott D."/>
            <person name="Birtle Z."/>
            <person name="Marques A.C."/>
            <person name="Graves T."/>
            <person name="Zhou S."/>
            <person name="Teague B."/>
            <person name="Potamousis K."/>
            <person name="Churas C."/>
            <person name="Place M."/>
            <person name="Herschleb J."/>
            <person name="Runnheim R."/>
            <person name="Forrest D."/>
            <person name="Amos-Landgraf J."/>
            <person name="Schwartz D.C."/>
            <person name="Cheng Z."/>
            <person name="Lindblad-Toh K."/>
            <person name="Eichler E.E."/>
            <person name="Ponting C.P."/>
        </authorList>
    </citation>
    <scope>NUCLEOTIDE SEQUENCE [LARGE SCALE GENOMIC DNA]</scope>
    <source>
        <strain>C57BL/6J</strain>
    </source>
</reference>
<reference key="4">
    <citation type="journal article" date="2004" name="Genome Res.">
        <title>The status, quality, and expansion of the NIH full-length cDNA project: the Mammalian Gene Collection (MGC).</title>
        <authorList>
            <consortium name="The MGC Project Team"/>
        </authorList>
    </citation>
    <scope>NUCLEOTIDE SEQUENCE [LARGE SCALE MRNA]</scope>
    <source>
        <strain>C57BL/6J</strain>
        <tissue>Brain</tissue>
    </source>
</reference>
<reference key="5">
    <citation type="journal article" date="1999" name="Mamm. Genome">
        <title>Genomic structure, mapping, and expression analysis of the mammalian Lunatic, Manic, and Radical fringe genes.</title>
        <authorList>
            <person name="Moran J.L."/>
            <person name="Johnston S.H."/>
            <person name="Rauskolb C."/>
            <person name="Bhalerao J."/>
            <person name="Bowcock A.M."/>
            <person name="Vogt T.F."/>
        </authorList>
    </citation>
    <scope>DEVELOPMENTAL STAGE</scope>
</reference>
<reference key="6">
    <citation type="journal article" date="2005" name="J. Biol. Chem.">
        <title>Lunatic fringe, manic fringe, and radical fringe recognize similar specificity determinants in O-fucosylated epidermal growth factor-like repeats.</title>
        <authorList>
            <person name="Rampal R."/>
            <person name="Li A.S."/>
            <person name="Moloney D.J."/>
            <person name="Georgiou S.A."/>
            <person name="Luther K.B."/>
            <person name="Nita-Lazar A."/>
            <person name="Haltiwanger R.S."/>
        </authorList>
    </citation>
    <scope>CATALYTIC ACTIVITY</scope>
    <scope>COFACTOR</scope>
    <scope>BIOPHYSICOCHEMICAL PROPERTIES</scope>
</reference>
<reference key="7">
    <citation type="journal article" date="2017" name="Dev. Cell">
        <title>Deciphering the fringe-mediated notch code: identification of activating and inhibiting sites allowing discrimination between ligands.</title>
        <authorList>
            <person name="Kakuda S."/>
            <person name="Haltiwanger R.S."/>
        </authorList>
    </citation>
    <scope>FUNCTION</scope>
</reference>
<feature type="chain" id="PRO_0000219186" description="Beta-1,3-N-acetylglucosaminyltransferase radical fringe">
    <location>
        <begin position="1"/>
        <end position="332"/>
    </location>
</feature>
<feature type="topological domain" description="Cytoplasmic" evidence="4">
    <location>
        <begin position="1"/>
        <end position="6"/>
    </location>
</feature>
<feature type="transmembrane region" description="Helical; Signal-anchor for type II membrane protein" evidence="4">
    <location>
        <begin position="7"/>
        <end position="29"/>
    </location>
</feature>
<feature type="topological domain" description="Lumenal" evidence="4">
    <location>
        <begin position="30"/>
        <end position="332"/>
    </location>
</feature>
<feature type="active site" evidence="1">
    <location>
        <position position="238"/>
    </location>
</feature>
<feature type="binding site" evidence="1">
    <location>
        <position position="75"/>
    </location>
    <ligand>
        <name>substrate</name>
    </ligand>
</feature>
<feature type="binding site" evidence="1">
    <location>
        <position position="148"/>
    </location>
    <ligand>
        <name>substrate</name>
    </ligand>
</feature>
<feature type="binding site" evidence="1">
    <location>
        <position position="149"/>
    </location>
    <ligand>
        <name>Mn(2+)</name>
        <dbReference type="ChEBI" id="CHEBI:29035"/>
    </ligand>
</feature>
<feature type="binding site" evidence="1">
    <location>
        <position position="262"/>
    </location>
    <ligand>
        <name>Mn(2+)</name>
        <dbReference type="ChEBI" id="CHEBI:29035"/>
    </ligand>
</feature>
<feature type="glycosylation site" description="N-linked (GlcNAc...) asparagine" evidence="4">
    <location>
        <position position="114"/>
    </location>
</feature>
<feature type="disulfide bond" evidence="1">
    <location>
        <begin position="115"/>
        <end position="126"/>
    </location>
</feature>
<feature type="disulfide bond" evidence="1">
    <location>
        <begin position="144"/>
        <end position="208"/>
    </location>
</feature>
<feature type="disulfide bond" evidence="1">
    <location>
        <begin position="312"/>
        <end position="321"/>
    </location>
</feature>
<sequence length="332" mass="36926">MSRARRVLCRACLALAAVLAVLLLLPLPLPLPLPRAPAPDPDRVPTRSLTLEGDRLQPDDVFIAVKTTRKNHGPRLRLLLRTWISRAPRQTFIFTDGDDPELQMLAGGRMINTNCSAVRTRQALCCKMSVEYDKFLESGRKWFCHVDDDNYVNPKSLLHLLSTFSSNQDIYLGRPSLDHPIEATERVQGGGTSNTVKFWFATGGAGFCLSRGLALKMSPWASLGSFMSTAERVRLPDDCTVGYIVEGLLGARLLHSPLFHSHLENLQRLPSGAILQQVTLSYGGPENPHNVVNVAGSFNIQQDPTRFQSVHCLLYPDTHWCPMKNRVEGAFQ</sequence>
<accession>O09009</accession>
<accession>B1ATU3</accession>
<protein>
    <recommendedName>
        <fullName evidence="7">Beta-1,3-N-acetylglucosaminyltransferase radical fringe</fullName>
        <ecNumber evidence="5">2.4.1.222</ecNumber>
    </recommendedName>
    <alternativeName>
        <fullName>O-fucosylpeptide 3-beta-N-acetylglucosaminyltransferase</fullName>
    </alternativeName>
</protein>
<proteinExistence type="evidence at protein level"/>
<name>RFNG_MOUSE</name>
<comment type="function">
    <text evidence="2 3 6">Glycosyltransferase that initiates the elongation of O-linked fucose residues attached to EGF-like repeats in the extracellular domain of Notch molecules. Modulates NOTCH1 activity by modifying O-fucose residues at specific EGF-like domains resulting in enhancement of NOTCH1 activation by DLL1 and JAG1 (PubMed:28089369). May be involved in limb formation and in neurogenesis (By similarity).</text>
</comment>
<comment type="catalytic activity">
    <reaction evidence="5">
        <text>3-O-(alpha-L-fucosyl)-L-threonyl-[EGF-like domain protein] + UDP-N-acetyl-alpha-D-glucosamine = 3-O-(N-acetyl-beta-D-glucosaminyl-(1-&gt;3)-alpha-L-fucosyl)-L-threonyl-[EGF-like domain protein] + UDP + H(+)</text>
        <dbReference type="Rhea" id="RHEA:70531"/>
        <dbReference type="Rhea" id="RHEA-COMP:17922"/>
        <dbReference type="Rhea" id="RHEA-COMP:17923"/>
        <dbReference type="ChEBI" id="CHEBI:15378"/>
        <dbReference type="ChEBI" id="CHEBI:57705"/>
        <dbReference type="ChEBI" id="CHEBI:58223"/>
        <dbReference type="ChEBI" id="CHEBI:189631"/>
        <dbReference type="ChEBI" id="CHEBI:189634"/>
        <dbReference type="EC" id="2.4.1.222"/>
    </reaction>
</comment>
<comment type="catalytic activity">
    <reaction evidence="5">
        <text>3-O-(alpha-L-fucosyl)-L-seryl-[EGF-like domain protein] + UDP-N-acetyl-alpha-D-glucosamine = 3-O-(N-acetyl-beta-D-glucosaminyl-(1-&gt;3)-alpha-L-fucosyl)-L-seryl-[EGF-like domain protein] + UDP + H(+)</text>
        <dbReference type="Rhea" id="RHEA:70511"/>
        <dbReference type="Rhea" id="RHEA-COMP:17919"/>
        <dbReference type="Rhea" id="RHEA-COMP:17920"/>
        <dbReference type="ChEBI" id="CHEBI:15378"/>
        <dbReference type="ChEBI" id="CHEBI:57705"/>
        <dbReference type="ChEBI" id="CHEBI:58223"/>
        <dbReference type="ChEBI" id="CHEBI:189632"/>
        <dbReference type="ChEBI" id="CHEBI:189633"/>
        <dbReference type="EC" id="2.4.1.222"/>
    </reaction>
</comment>
<comment type="cofactor">
    <cofactor evidence="5">
        <name>Mn(2+)</name>
        <dbReference type="ChEBI" id="CHEBI:29035"/>
    </cofactor>
    <text evidence="5">Has some activity with cobalt but not with magnesium, calcium and zinc.</text>
</comment>
<comment type="biophysicochemical properties">
    <kinetics>
        <KM evidence="5">53.6 uM for UDP-N-acetyl-alpha-D-glucosamine</KM>
        <Vmax evidence="5">1.6 nmol/min/mg enzyme</Vmax>
    </kinetics>
    <temperatureDependence>
        <text evidence="5">Optimum temperature is 37 degrees Celsius.</text>
    </temperatureDependence>
</comment>
<comment type="subcellular location">
    <subcellularLocation>
        <location evidence="7">Golgi apparatus membrane</location>
        <topology evidence="7">Single-pass type II membrane protein</topology>
    </subcellularLocation>
</comment>
<comment type="tissue specificity">
    <text>Detected in all the examined tissues (12.5 dpc). High expression found in adult brain.</text>
</comment>
<comment type="similarity">
    <text evidence="7">Belongs to the glycosyltransferase 31 family.</text>
</comment>
<evidence type="ECO:0000250" key="1"/>
<evidence type="ECO:0000250" key="2">
    <source>
        <dbReference type="UniProtKB" id="O12972"/>
    </source>
</evidence>
<evidence type="ECO:0000250" key="3">
    <source>
        <dbReference type="UniProtKB" id="Q9R1U9"/>
    </source>
</evidence>
<evidence type="ECO:0000255" key="4"/>
<evidence type="ECO:0000269" key="5">
    <source>
    </source>
</evidence>
<evidence type="ECO:0000269" key="6">
    <source>
    </source>
</evidence>
<evidence type="ECO:0000305" key="7"/>
<evidence type="ECO:0000312" key="8">
    <source>
        <dbReference type="MGI" id="MGI:894275"/>
    </source>
</evidence>
<organism>
    <name type="scientific">Mus musculus</name>
    <name type="common">Mouse</name>
    <dbReference type="NCBI Taxonomy" id="10090"/>
    <lineage>
        <taxon>Eukaryota</taxon>
        <taxon>Metazoa</taxon>
        <taxon>Chordata</taxon>
        <taxon>Craniata</taxon>
        <taxon>Vertebrata</taxon>
        <taxon>Euteleostomi</taxon>
        <taxon>Mammalia</taxon>
        <taxon>Eutheria</taxon>
        <taxon>Euarchontoglires</taxon>
        <taxon>Glires</taxon>
        <taxon>Rodentia</taxon>
        <taxon>Myomorpha</taxon>
        <taxon>Muroidea</taxon>
        <taxon>Muridae</taxon>
        <taxon>Murinae</taxon>
        <taxon>Mus</taxon>
        <taxon>Mus</taxon>
    </lineage>
</organism>